<protein>
    <recommendedName>
        <fullName evidence="1">Protoheme IX farnesyltransferase</fullName>
        <ecNumber evidence="1">2.5.1.141</ecNumber>
    </recommendedName>
    <alternativeName>
        <fullName evidence="1">Heme B farnesyltransferase</fullName>
    </alternativeName>
    <alternativeName>
        <fullName evidence="1">Heme O synthase</fullName>
    </alternativeName>
</protein>
<keyword id="KW-1003">Cell membrane</keyword>
<keyword id="KW-0350">Heme biosynthesis</keyword>
<keyword id="KW-0472">Membrane</keyword>
<keyword id="KW-1185">Reference proteome</keyword>
<keyword id="KW-0808">Transferase</keyword>
<keyword id="KW-0812">Transmembrane</keyword>
<keyword id="KW-1133">Transmembrane helix</keyword>
<reference key="1">
    <citation type="journal article" date="2007" name="Genome Res.">
        <title>Genome characteristics of facultatively symbiotic Frankia sp. strains reflect host range and host plant biogeography.</title>
        <authorList>
            <person name="Normand P."/>
            <person name="Lapierre P."/>
            <person name="Tisa L.S."/>
            <person name="Gogarten J.P."/>
            <person name="Alloisio N."/>
            <person name="Bagnarol E."/>
            <person name="Bassi C.A."/>
            <person name="Berry A.M."/>
            <person name="Bickhart D.M."/>
            <person name="Choisne N."/>
            <person name="Couloux A."/>
            <person name="Cournoyer B."/>
            <person name="Cruveiller S."/>
            <person name="Daubin V."/>
            <person name="Demange N."/>
            <person name="Francino M.P."/>
            <person name="Goltsman E."/>
            <person name="Huang Y."/>
            <person name="Kopp O.R."/>
            <person name="Labarre L."/>
            <person name="Lapidus A."/>
            <person name="Lavire C."/>
            <person name="Marechal J."/>
            <person name="Martinez M."/>
            <person name="Mastronunzio J.E."/>
            <person name="Mullin B.C."/>
            <person name="Niemann J."/>
            <person name="Pujic P."/>
            <person name="Rawnsley T."/>
            <person name="Rouy Z."/>
            <person name="Schenowitz C."/>
            <person name="Sellstedt A."/>
            <person name="Tavares F."/>
            <person name="Tomkins J.P."/>
            <person name="Vallenet D."/>
            <person name="Valverde C."/>
            <person name="Wall L.G."/>
            <person name="Wang Y."/>
            <person name="Medigue C."/>
            <person name="Benson D.R."/>
        </authorList>
    </citation>
    <scope>NUCLEOTIDE SEQUENCE [LARGE SCALE GENOMIC DNA]</scope>
    <source>
        <strain>DSM 45818 / CECT 9043 / HFP020203 / CcI3</strain>
    </source>
</reference>
<comment type="function">
    <text evidence="1">Converts heme B (protoheme IX) to heme O by substitution of the vinyl group on carbon 2 of heme B porphyrin ring with a hydroxyethyl farnesyl side group.</text>
</comment>
<comment type="catalytic activity">
    <reaction evidence="1">
        <text>heme b + (2E,6E)-farnesyl diphosphate + H2O = Fe(II)-heme o + diphosphate</text>
        <dbReference type="Rhea" id="RHEA:28070"/>
        <dbReference type="ChEBI" id="CHEBI:15377"/>
        <dbReference type="ChEBI" id="CHEBI:33019"/>
        <dbReference type="ChEBI" id="CHEBI:60344"/>
        <dbReference type="ChEBI" id="CHEBI:60530"/>
        <dbReference type="ChEBI" id="CHEBI:175763"/>
        <dbReference type="EC" id="2.5.1.141"/>
    </reaction>
</comment>
<comment type="pathway">
    <text evidence="1">Porphyrin-containing compound metabolism; heme O biosynthesis; heme O from protoheme: step 1/1.</text>
</comment>
<comment type="subcellular location">
    <subcellularLocation>
        <location evidence="1">Cell membrane</location>
        <topology evidence="1">Multi-pass membrane protein</topology>
    </subcellularLocation>
</comment>
<comment type="miscellaneous">
    <text evidence="1">Carbon 2 of the heme B porphyrin ring is defined according to the Fischer nomenclature.</text>
</comment>
<comment type="similarity">
    <text evidence="1">Belongs to the UbiA prenyltransferase family. Protoheme IX farnesyltransferase subfamily.</text>
</comment>
<evidence type="ECO:0000255" key="1">
    <source>
        <dbReference type="HAMAP-Rule" id="MF_00154"/>
    </source>
</evidence>
<sequence length="289" mass="31071">MSAKARGYVALMKLRVVELLLITTVPVMMLAERGVPSLRLIAVTLVAGTLAAGSANTINCYVDRDIDQMMGRTKRRPLVRATVTPTEALTFGIVIGIVSTLLFGFLVNWPSALLADGAIAFYVFVYTLGLKRRTPSNIVIGGAAGCFPVLIGWSAVTGTVGWAAVLLFAVVFFWTPPHFWALAMKFRDDYAAAGVPMLPVVASVQVVTRRMLGYAYAMVAASLAVAPVASTGPVYLVAAVAVGAWFLVESHRVARRARHGEDPRPMRLFHMSITYLTLLFVAIAVTALV</sequence>
<proteinExistence type="inferred from homology"/>
<feature type="chain" id="PRO_0000327055" description="Protoheme IX farnesyltransferase">
    <location>
        <begin position="1"/>
        <end position="289"/>
    </location>
</feature>
<feature type="transmembrane region" description="Helical" evidence="1">
    <location>
        <begin position="9"/>
        <end position="29"/>
    </location>
</feature>
<feature type="transmembrane region" description="Helical" evidence="1">
    <location>
        <begin position="40"/>
        <end position="60"/>
    </location>
</feature>
<feature type="transmembrane region" description="Helical" evidence="1">
    <location>
        <begin position="89"/>
        <end position="109"/>
    </location>
</feature>
<feature type="transmembrane region" description="Helical" evidence="1">
    <location>
        <begin position="110"/>
        <end position="130"/>
    </location>
</feature>
<feature type="transmembrane region" description="Helical" evidence="1">
    <location>
        <begin position="134"/>
        <end position="154"/>
    </location>
</feature>
<feature type="transmembrane region" description="Helical" evidence="1">
    <location>
        <begin position="155"/>
        <end position="175"/>
    </location>
</feature>
<feature type="transmembrane region" description="Helical" evidence="1">
    <location>
        <begin position="190"/>
        <end position="209"/>
    </location>
</feature>
<feature type="transmembrane region" description="Helical" evidence="1">
    <location>
        <begin position="228"/>
        <end position="248"/>
    </location>
</feature>
<feature type="transmembrane region" description="Helical" evidence="1">
    <location>
        <begin position="269"/>
        <end position="289"/>
    </location>
</feature>
<gene>
    <name evidence="1" type="primary">ctaB</name>
    <name type="ordered locus">Francci3_1649</name>
</gene>
<accession>Q2JCG7</accession>
<dbReference type="EC" id="2.5.1.141" evidence="1"/>
<dbReference type="EMBL" id="CP000249">
    <property type="protein sequence ID" value="ABD11025.1"/>
    <property type="molecule type" value="Genomic_DNA"/>
</dbReference>
<dbReference type="RefSeq" id="WP_011436088.1">
    <property type="nucleotide sequence ID" value="NZ_JENI01000041.1"/>
</dbReference>
<dbReference type="SMR" id="Q2JCG7"/>
<dbReference type="STRING" id="106370.Francci3_1649"/>
<dbReference type="KEGG" id="fra:Francci3_1649"/>
<dbReference type="eggNOG" id="COG0109">
    <property type="taxonomic scope" value="Bacteria"/>
</dbReference>
<dbReference type="HOGENOM" id="CLU_029631_0_1_11"/>
<dbReference type="OrthoDB" id="9814417at2"/>
<dbReference type="PhylomeDB" id="Q2JCG7"/>
<dbReference type="UniPathway" id="UPA00834">
    <property type="reaction ID" value="UER00712"/>
</dbReference>
<dbReference type="Proteomes" id="UP000001937">
    <property type="component" value="Chromosome"/>
</dbReference>
<dbReference type="GO" id="GO:0005886">
    <property type="term" value="C:plasma membrane"/>
    <property type="evidence" value="ECO:0007669"/>
    <property type="project" value="UniProtKB-SubCell"/>
</dbReference>
<dbReference type="GO" id="GO:0008495">
    <property type="term" value="F:protoheme IX farnesyltransferase activity"/>
    <property type="evidence" value="ECO:0007669"/>
    <property type="project" value="UniProtKB-UniRule"/>
</dbReference>
<dbReference type="GO" id="GO:0048034">
    <property type="term" value="P:heme O biosynthetic process"/>
    <property type="evidence" value="ECO:0007669"/>
    <property type="project" value="UniProtKB-UniRule"/>
</dbReference>
<dbReference type="CDD" id="cd13957">
    <property type="entry name" value="PT_UbiA_Cox10"/>
    <property type="match status" value="1"/>
</dbReference>
<dbReference type="FunFam" id="1.10.357.140:FF:000001">
    <property type="entry name" value="Protoheme IX farnesyltransferase"/>
    <property type="match status" value="1"/>
</dbReference>
<dbReference type="Gene3D" id="1.10.357.140">
    <property type="entry name" value="UbiA prenyltransferase"/>
    <property type="match status" value="1"/>
</dbReference>
<dbReference type="HAMAP" id="MF_00154">
    <property type="entry name" value="CyoE_CtaB"/>
    <property type="match status" value="1"/>
</dbReference>
<dbReference type="InterPro" id="IPR006369">
    <property type="entry name" value="Protohaem_IX_farnesylTrfase"/>
</dbReference>
<dbReference type="InterPro" id="IPR000537">
    <property type="entry name" value="UbiA_prenyltransferase"/>
</dbReference>
<dbReference type="InterPro" id="IPR044878">
    <property type="entry name" value="UbiA_sf"/>
</dbReference>
<dbReference type="NCBIfam" id="TIGR01473">
    <property type="entry name" value="cyoE_ctaB"/>
    <property type="match status" value="1"/>
</dbReference>
<dbReference type="NCBIfam" id="NF003349">
    <property type="entry name" value="PRK04375.1-2"/>
    <property type="match status" value="1"/>
</dbReference>
<dbReference type="PANTHER" id="PTHR43448:SF7">
    <property type="entry name" value="4-HYDROXYBENZOATE SOLANESYLTRANSFERASE"/>
    <property type="match status" value="1"/>
</dbReference>
<dbReference type="PANTHER" id="PTHR43448">
    <property type="entry name" value="PROTOHEME IX FARNESYLTRANSFERASE, MITOCHONDRIAL"/>
    <property type="match status" value="1"/>
</dbReference>
<dbReference type="Pfam" id="PF01040">
    <property type="entry name" value="UbiA"/>
    <property type="match status" value="1"/>
</dbReference>
<name>COXX_FRACC</name>
<organism>
    <name type="scientific">Frankia casuarinae (strain DSM 45818 / CECT 9043 / HFP020203 / CcI3)</name>
    <dbReference type="NCBI Taxonomy" id="106370"/>
    <lineage>
        <taxon>Bacteria</taxon>
        <taxon>Bacillati</taxon>
        <taxon>Actinomycetota</taxon>
        <taxon>Actinomycetes</taxon>
        <taxon>Frankiales</taxon>
        <taxon>Frankiaceae</taxon>
        <taxon>Frankia</taxon>
    </lineage>
</organism>